<evidence type="ECO:0000250" key="1"/>
<evidence type="ECO:0000256" key="2">
    <source>
        <dbReference type="SAM" id="MobiDB-lite"/>
    </source>
</evidence>
<evidence type="ECO:0000305" key="3"/>
<sequence>MAVPARHTSSAKKNRRRTHYKLTAPTVTFDETTGDYRHSHRVSLKGYYKGRKVRDTK</sequence>
<keyword id="KW-1185">Reference proteome</keyword>
<keyword id="KW-0687">Ribonucleoprotein</keyword>
<keyword id="KW-0689">Ribosomal protein</keyword>
<comment type="similarity">
    <text evidence="3">Belongs to the bacterial ribosomal protein bL32 family.</text>
</comment>
<name>RL32_LACLA</name>
<protein>
    <recommendedName>
        <fullName evidence="3">Large ribosomal subunit protein bL32</fullName>
    </recommendedName>
    <alternativeName>
        <fullName>50S ribosomal protein L32</fullName>
    </alternativeName>
</protein>
<dbReference type="EMBL" id="AE005176">
    <property type="protein sequence ID" value="AAK04192.1"/>
    <property type="molecule type" value="Genomic_DNA"/>
</dbReference>
<dbReference type="PIR" id="F86636">
    <property type="entry name" value="F86636"/>
</dbReference>
<dbReference type="RefSeq" id="NP_266250.1">
    <property type="nucleotide sequence ID" value="NC_002662.1"/>
</dbReference>
<dbReference type="RefSeq" id="WP_010905107.1">
    <property type="nucleotide sequence ID" value="NC_002662.1"/>
</dbReference>
<dbReference type="SMR" id="Q9CJA6"/>
<dbReference type="PaxDb" id="272623-L00096"/>
<dbReference type="EnsemblBacteria" id="AAK04192">
    <property type="protein sequence ID" value="AAK04192"/>
    <property type="gene ID" value="L00096"/>
</dbReference>
<dbReference type="GeneID" id="89632239"/>
<dbReference type="KEGG" id="lla:L00096"/>
<dbReference type="PATRIC" id="fig|272623.7.peg.108"/>
<dbReference type="eggNOG" id="COG0333">
    <property type="taxonomic scope" value="Bacteria"/>
</dbReference>
<dbReference type="HOGENOM" id="CLU_129084_2_1_9"/>
<dbReference type="OrthoDB" id="9812874at2"/>
<dbReference type="Proteomes" id="UP000002196">
    <property type="component" value="Chromosome"/>
</dbReference>
<dbReference type="GO" id="GO:0015934">
    <property type="term" value="C:large ribosomal subunit"/>
    <property type="evidence" value="ECO:0007669"/>
    <property type="project" value="InterPro"/>
</dbReference>
<dbReference type="GO" id="GO:0003735">
    <property type="term" value="F:structural constituent of ribosome"/>
    <property type="evidence" value="ECO:0007669"/>
    <property type="project" value="InterPro"/>
</dbReference>
<dbReference type="GO" id="GO:0006412">
    <property type="term" value="P:translation"/>
    <property type="evidence" value="ECO:0007669"/>
    <property type="project" value="UniProtKB-UniRule"/>
</dbReference>
<dbReference type="HAMAP" id="MF_00340">
    <property type="entry name" value="Ribosomal_bL32"/>
    <property type="match status" value="1"/>
</dbReference>
<dbReference type="InterPro" id="IPR002677">
    <property type="entry name" value="Ribosomal_bL32"/>
</dbReference>
<dbReference type="InterPro" id="IPR044957">
    <property type="entry name" value="Ribosomal_bL32_bact"/>
</dbReference>
<dbReference type="InterPro" id="IPR011332">
    <property type="entry name" value="Ribosomal_zn-bd"/>
</dbReference>
<dbReference type="NCBIfam" id="TIGR01031">
    <property type="entry name" value="rpmF_bact"/>
    <property type="match status" value="1"/>
</dbReference>
<dbReference type="PANTHER" id="PTHR35534">
    <property type="entry name" value="50S RIBOSOMAL PROTEIN L32"/>
    <property type="match status" value="1"/>
</dbReference>
<dbReference type="PANTHER" id="PTHR35534:SF1">
    <property type="entry name" value="LARGE RIBOSOMAL SUBUNIT PROTEIN BL32"/>
    <property type="match status" value="1"/>
</dbReference>
<dbReference type="Pfam" id="PF01783">
    <property type="entry name" value="Ribosomal_L32p"/>
    <property type="match status" value="1"/>
</dbReference>
<dbReference type="SUPFAM" id="SSF57829">
    <property type="entry name" value="Zn-binding ribosomal proteins"/>
    <property type="match status" value="1"/>
</dbReference>
<reference key="1">
    <citation type="journal article" date="2001" name="Genome Res.">
        <title>The complete genome sequence of the lactic acid bacterium Lactococcus lactis ssp. lactis IL1403.</title>
        <authorList>
            <person name="Bolotin A."/>
            <person name="Wincker P."/>
            <person name="Mauger S."/>
            <person name="Jaillon O."/>
            <person name="Malarme K."/>
            <person name="Weissenbach J."/>
            <person name="Ehrlich S.D."/>
            <person name="Sorokin A."/>
        </authorList>
    </citation>
    <scope>NUCLEOTIDE SEQUENCE [LARGE SCALE GENOMIC DNA]</scope>
    <source>
        <strain>IL1403</strain>
    </source>
</reference>
<gene>
    <name type="primary">rpmF</name>
    <name type="ordered locus">LL0094</name>
    <name type="ORF">L00096</name>
</gene>
<organism>
    <name type="scientific">Lactococcus lactis subsp. lactis (strain IL1403)</name>
    <name type="common">Streptococcus lactis</name>
    <dbReference type="NCBI Taxonomy" id="272623"/>
    <lineage>
        <taxon>Bacteria</taxon>
        <taxon>Bacillati</taxon>
        <taxon>Bacillota</taxon>
        <taxon>Bacilli</taxon>
        <taxon>Lactobacillales</taxon>
        <taxon>Streptococcaceae</taxon>
        <taxon>Lactococcus</taxon>
    </lineage>
</organism>
<feature type="initiator methionine" description="Removed" evidence="1">
    <location>
        <position position="1"/>
    </location>
</feature>
<feature type="chain" id="PRO_0000172351" description="Large ribosomal subunit protein bL32">
    <location>
        <begin position="2"/>
        <end position="57"/>
    </location>
</feature>
<feature type="region of interest" description="Disordered" evidence="2">
    <location>
        <begin position="1"/>
        <end position="23"/>
    </location>
</feature>
<feature type="compositionally biased region" description="Basic residues" evidence="2">
    <location>
        <begin position="9"/>
        <end position="20"/>
    </location>
</feature>
<proteinExistence type="inferred from homology"/>
<accession>Q9CJA6</accession>